<dbReference type="EMBL" id="AM420293">
    <property type="protein sequence ID" value="CAM05226.1"/>
    <property type="molecule type" value="Genomic_DNA"/>
</dbReference>
<dbReference type="RefSeq" id="WP_011874927.1">
    <property type="nucleotide sequence ID" value="NC_009142.1"/>
</dbReference>
<dbReference type="SMR" id="A4FMF1"/>
<dbReference type="STRING" id="405948.SACE_6053"/>
<dbReference type="KEGG" id="sen:SACE_6053"/>
<dbReference type="eggNOG" id="COG0228">
    <property type="taxonomic scope" value="Bacteria"/>
</dbReference>
<dbReference type="HOGENOM" id="CLU_100590_1_1_11"/>
<dbReference type="OrthoDB" id="9807878at2"/>
<dbReference type="Proteomes" id="UP000006728">
    <property type="component" value="Chromosome"/>
</dbReference>
<dbReference type="GO" id="GO:0005737">
    <property type="term" value="C:cytoplasm"/>
    <property type="evidence" value="ECO:0007669"/>
    <property type="project" value="UniProtKB-ARBA"/>
</dbReference>
<dbReference type="GO" id="GO:0015935">
    <property type="term" value="C:small ribosomal subunit"/>
    <property type="evidence" value="ECO:0007669"/>
    <property type="project" value="TreeGrafter"/>
</dbReference>
<dbReference type="GO" id="GO:0003735">
    <property type="term" value="F:structural constituent of ribosome"/>
    <property type="evidence" value="ECO:0007669"/>
    <property type="project" value="InterPro"/>
</dbReference>
<dbReference type="GO" id="GO:0006412">
    <property type="term" value="P:translation"/>
    <property type="evidence" value="ECO:0007669"/>
    <property type="project" value="UniProtKB-UniRule"/>
</dbReference>
<dbReference type="Gene3D" id="3.30.1320.10">
    <property type="match status" value="1"/>
</dbReference>
<dbReference type="HAMAP" id="MF_00385">
    <property type="entry name" value="Ribosomal_bS16"/>
    <property type="match status" value="1"/>
</dbReference>
<dbReference type="InterPro" id="IPR000307">
    <property type="entry name" value="Ribosomal_bS16"/>
</dbReference>
<dbReference type="InterPro" id="IPR020592">
    <property type="entry name" value="Ribosomal_bS16_CS"/>
</dbReference>
<dbReference type="InterPro" id="IPR023803">
    <property type="entry name" value="Ribosomal_bS16_dom_sf"/>
</dbReference>
<dbReference type="NCBIfam" id="NF011093">
    <property type="entry name" value="PRK14520.1"/>
    <property type="match status" value="1"/>
</dbReference>
<dbReference type="NCBIfam" id="TIGR00002">
    <property type="entry name" value="S16"/>
    <property type="match status" value="1"/>
</dbReference>
<dbReference type="PANTHER" id="PTHR12919">
    <property type="entry name" value="30S RIBOSOMAL PROTEIN S16"/>
    <property type="match status" value="1"/>
</dbReference>
<dbReference type="PANTHER" id="PTHR12919:SF20">
    <property type="entry name" value="SMALL RIBOSOMAL SUBUNIT PROTEIN BS16M"/>
    <property type="match status" value="1"/>
</dbReference>
<dbReference type="Pfam" id="PF00886">
    <property type="entry name" value="Ribosomal_S16"/>
    <property type="match status" value="1"/>
</dbReference>
<dbReference type="SUPFAM" id="SSF54565">
    <property type="entry name" value="Ribosomal protein S16"/>
    <property type="match status" value="1"/>
</dbReference>
<dbReference type="PROSITE" id="PS00732">
    <property type="entry name" value="RIBOSOMAL_S16"/>
    <property type="match status" value="1"/>
</dbReference>
<evidence type="ECO:0000255" key="1">
    <source>
        <dbReference type="HAMAP-Rule" id="MF_00385"/>
    </source>
</evidence>
<evidence type="ECO:0000256" key="2">
    <source>
        <dbReference type="SAM" id="MobiDB-lite"/>
    </source>
</evidence>
<evidence type="ECO:0000305" key="3"/>
<comment type="similarity">
    <text evidence="1">Belongs to the bacterial ribosomal protein bS16 family.</text>
</comment>
<name>RS16_SACEN</name>
<keyword id="KW-1185">Reference proteome</keyword>
<keyword id="KW-0687">Ribonucleoprotein</keyword>
<keyword id="KW-0689">Ribosomal protein</keyword>
<protein>
    <recommendedName>
        <fullName evidence="1">Small ribosomal subunit protein bS16</fullName>
    </recommendedName>
    <alternativeName>
        <fullName evidence="3">30S ribosomal protein S16</fullName>
    </alternativeName>
</protein>
<feature type="chain" id="PRO_1000049341" description="Small ribosomal subunit protein bS16">
    <location>
        <begin position="1"/>
        <end position="148"/>
    </location>
</feature>
<feature type="region of interest" description="Disordered" evidence="2">
    <location>
        <begin position="111"/>
        <end position="148"/>
    </location>
</feature>
<feature type="compositionally biased region" description="Low complexity" evidence="2">
    <location>
        <begin position="111"/>
        <end position="122"/>
    </location>
</feature>
<feature type="compositionally biased region" description="Basic and acidic residues" evidence="2">
    <location>
        <begin position="130"/>
        <end position="148"/>
    </location>
</feature>
<proteinExistence type="inferred from homology"/>
<organism>
    <name type="scientific">Saccharopolyspora erythraea (strain ATCC 11635 / DSM 40517 / JCM 4748 / NBRC 13426 / NCIMB 8594 / NRRL 2338)</name>
    <dbReference type="NCBI Taxonomy" id="405948"/>
    <lineage>
        <taxon>Bacteria</taxon>
        <taxon>Bacillati</taxon>
        <taxon>Actinomycetota</taxon>
        <taxon>Actinomycetes</taxon>
        <taxon>Pseudonocardiales</taxon>
        <taxon>Pseudonocardiaceae</taxon>
        <taxon>Saccharopolyspora</taxon>
    </lineage>
</organism>
<accession>A4FMF1</accession>
<reference key="1">
    <citation type="journal article" date="2007" name="Nat. Biotechnol.">
        <title>Complete genome sequence of the erythromycin-producing bacterium Saccharopolyspora erythraea NRRL23338.</title>
        <authorList>
            <person name="Oliynyk M."/>
            <person name="Samborskyy M."/>
            <person name="Lester J.B."/>
            <person name="Mironenko T."/>
            <person name="Scott N."/>
            <person name="Dickens S."/>
            <person name="Haydock S.F."/>
            <person name="Leadlay P.F."/>
        </authorList>
    </citation>
    <scope>NUCLEOTIDE SEQUENCE [LARGE SCALE GENOMIC DNA]</scope>
    <source>
        <strain>ATCC 11635 / DSM 40517 / JCM 4748 / NBRC 13426 / NCIMB 8594 / NRRL 2338</strain>
    </source>
</reference>
<sequence>MAVKIKLARIGKIREPHYRIVVADARTRRNGRAIETIGQYHPMEEPSRIEVDSERAQYWLGVGAQPTEPVQNILEITGDWQKFKGLPGAEGTLKTAAPKPSKQELFEAALAAAGEEPVAEATTPKKKGGKKAEAEDKAEEQKSEEGQA</sequence>
<gene>
    <name evidence="1" type="primary">rpsP</name>
    <name type="ordered locus">SACE_6053</name>
</gene>